<accession>Q5WT16</accession>
<sequence length="455" mass="48374">MSQRKYFGTDGIRGHVGLSNINPEFVLKLGWAVGCVLANGARKKVVIGKDTRVSGYMLESALEAGLSAAGVDVALLGPMPTPGIAYLTQTLRANAGIVISASHNLFEDNGIKFFSADGGKLPDSVELAIEAQLEKQLQTVPSAKLGKATRINDAAGRYIEFCKSTIPSLSRLSNLKIVVDCANGATYHIAPNVFSELGADVVPIGIKPDGFNINQECGSTAPELLREKVIAVGADIGIGLDGDGDRVILVDSLGNLVDGDQIIYIIAKDRHQRGVLHGGVVGTLMSNYGLELAITSLGVPFQRSKVGDRYVLEMLREKDWKIGGETSGHIVCLDKTTTGDGIVAALQVLSIMVKQNKALHELTAGIQLLPQTLVNLKTNNAALLASNPDVIQAVKNLEKHLNGEGRVLLRPSGTEPLLRVMVEGANASIVKQQAQMLCDDISQIDKKMTESLPST</sequence>
<organism>
    <name type="scientific">Legionella pneumophila (strain Lens)</name>
    <dbReference type="NCBI Taxonomy" id="297245"/>
    <lineage>
        <taxon>Bacteria</taxon>
        <taxon>Pseudomonadati</taxon>
        <taxon>Pseudomonadota</taxon>
        <taxon>Gammaproteobacteria</taxon>
        <taxon>Legionellales</taxon>
        <taxon>Legionellaceae</taxon>
        <taxon>Legionella</taxon>
    </lineage>
</organism>
<dbReference type="EC" id="5.4.2.10" evidence="1"/>
<dbReference type="EMBL" id="CR628337">
    <property type="protein sequence ID" value="CAH16950.1"/>
    <property type="molecule type" value="Genomic_DNA"/>
</dbReference>
<dbReference type="RefSeq" id="WP_011216636.1">
    <property type="nucleotide sequence ID" value="NC_006369.1"/>
</dbReference>
<dbReference type="SMR" id="Q5WT16"/>
<dbReference type="KEGG" id="lpf:lpl2709"/>
<dbReference type="LegioList" id="lpl2709"/>
<dbReference type="HOGENOM" id="CLU_016950_7_0_6"/>
<dbReference type="Proteomes" id="UP000002517">
    <property type="component" value="Chromosome"/>
</dbReference>
<dbReference type="GO" id="GO:0005829">
    <property type="term" value="C:cytosol"/>
    <property type="evidence" value="ECO:0007669"/>
    <property type="project" value="TreeGrafter"/>
</dbReference>
<dbReference type="GO" id="GO:0000287">
    <property type="term" value="F:magnesium ion binding"/>
    <property type="evidence" value="ECO:0007669"/>
    <property type="project" value="UniProtKB-UniRule"/>
</dbReference>
<dbReference type="GO" id="GO:0008966">
    <property type="term" value="F:phosphoglucosamine mutase activity"/>
    <property type="evidence" value="ECO:0007669"/>
    <property type="project" value="UniProtKB-UniRule"/>
</dbReference>
<dbReference type="GO" id="GO:0004615">
    <property type="term" value="F:phosphomannomutase activity"/>
    <property type="evidence" value="ECO:0007669"/>
    <property type="project" value="TreeGrafter"/>
</dbReference>
<dbReference type="GO" id="GO:0005975">
    <property type="term" value="P:carbohydrate metabolic process"/>
    <property type="evidence" value="ECO:0007669"/>
    <property type="project" value="InterPro"/>
</dbReference>
<dbReference type="GO" id="GO:0009252">
    <property type="term" value="P:peptidoglycan biosynthetic process"/>
    <property type="evidence" value="ECO:0007669"/>
    <property type="project" value="TreeGrafter"/>
</dbReference>
<dbReference type="GO" id="GO:0006048">
    <property type="term" value="P:UDP-N-acetylglucosamine biosynthetic process"/>
    <property type="evidence" value="ECO:0007669"/>
    <property type="project" value="TreeGrafter"/>
</dbReference>
<dbReference type="CDD" id="cd05802">
    <property type="entry name" value="GlmM"/>
    <property type="match status" value="1"/>
</dbReference>
<dbReference type="FunFam" id="3.30.310.50:FF:000001">
    <property type="entry name" value="Phosphoglucosamine mutase"/>
    <property type="match status" value="1"/>
</dbReference>
<dbReference type="FunFam" id="3.40.120.10:FF:000001">
    <property type="entry name" value="Phosphoglucosamine mutase"/>
    <property type="match status" value="1"/>
</dbReference>
<dbReference type="FunFam" id="3.40.120.10:FF:000002">
    <property type="entry name" value="Phosphoglucosamine mutase"/>
    <property type="match status" value="1"/>
</dbReference>
<dbReference type="Gene3D" id="3.40.120.10">
    <property type="entry name" value="Alpha-D-Glucose-1,6-Bisphosphate, subunit A, domain 3"/>
    <property type="match status" value="3"/>
</dbReference>
<dbReference type="Gene3D" id="3.30.310.50">
    <property type="entry name" value="Alpha-D-phosphohexomutase, C-terminal domain"/>
    <property type="match status" value="1"/>
</dbReference>
<dbReference type="HAMAP" id="MF_01554_B">
    <property type="entry name" value="GlmM_B"/>
    <property type="match status" value="1"/>
</dbReference>
<dbReference type="InterPro" id="IPR005844">
    <property type="entry name" value="A-D-PHexomutase_a/b/a-I"/>
</dbReference>
<dbReference type="InterPro" id="IPR016055">
    <property type="entry name" value="A-D-PHexomutase_a/b/a-I/II/III"/>
</dbReference>
<dbReference type="InterPro" id="IPR005845">
    <property type="entry name" value="A-D-PHexomutase_a/b/a-II"/>
</dbReference>
<dbReference type="InterPro" id="IPR005846">
    <property type="entry name" value="A-D-PHexomutase_a/b/a-III"/>
</dbReference>
<dbReference type="InterPro" id="IPR005843">
    <property type="entry name" value="A-D-PHexomutase_C"/>
</dbReference>
<dbReference type="InterPro" id="IPR036900">
    <property type="entry name" value="A-D-PHexomutase_C_sf"/>
</dbReference>
<dbReference type="InterPro" id="IPR005841">
    <property type="entry name" value="Alpha-D-phosphohexomutase_SF"/>
</dbReference>
<dbReference type="InterPro" id="IPR006352">
    <property type="entry name" value="GlmM_bact"/>
</dbReference>
<dbReference type="InterPro" id="IPR050060">
    <property type="entry name" value="Phosphoglucosamine_mutase"/>
</dbReference>
<dbReference type="NCBIfam" id="TIGR01455">
    <property type="entry name" value="glmM"/>
    <property type="match status" value="1"/>
</dbReference>
<dbReference type="NCBIfam" id="NF008139">
    <property type="entry name" value="PRK10887.1"/>
    <property type="match status" value="1"/>
</dbReference>
<dbReference type="PANTHER" id="PTHR42946:SF1">
    <property type="entry name" value="PHOSPHOGLUCOMUTASE (ALPHA-D-GLUCOSE-1,6-BISPHOSPHATE-DEPENDENT)"/>
    <property type="match status" value="1"/>
</dbReference>
<dbReference type="PANTHER" id="PTHR42946">
    <property type="entry name" value="PHOSPHOHEXOSE MUTASE"/>
    <property type="match status" value="1"/>
</dbReference>
<dbReference type="Pfam" id="PF02878">
    <property type="entry name" value="PGM_PMM_I"/>
    <property type="match status" value="1"/>
</dbReference>
<dbReference type="Pfam" id="PF02879">
    <property type="entry name" value="PGM_PMM_II"/>
    <property type="match status" value="1"/>
</dbReference>
<dbReference type="Pfam" id="PF02880">
    <property type="entry name" value="PGM_PMM_III"/>
    <property type="match status" value="1"/>
</dbReference>
<dbReference type="Pfam" id="PF00408">
    <property type="entry name" value="PGM_PMM_IV"/>
    <property type="match status" value="1"/>
</dbReference>
<dbReference type="PRINTS" id="PR00509">
    <property type="entry name" value="PGMPMM"/>
</dbReference>
<dbReference type="SUPFAM" id="SSF55957">
    <property type="entry name" value="Phosphoglucomutase, C-terminal domain"/>
    <property type="match status" value="1"/>
</dbReference>
<dbReference type="SUPFAM" id="SSF53738">
    <property type="entry name" value="Phosphoglucomutase, first 3 domains"/>
    <property type="match status" value="3"/>
</dbReference>
<keyword id="KW-0413">Isomerase</keyword>
<keyword id="KW-0460">Magnesium</keyword>
<keyword id="KW-0479">Metal-binding</keyword>
<keyword id="KW-0597">Phosphoprotein</keyword>
<protein>
    <recommendedName>
        <fullName evidence="1">Phosphoglucosamine mutase</fullName>
        <ecNumber evidence="1">5.4.2.10</ecNumber>
    </recommendedName>
</protein>
<comment type="function">
    <text evidence="1">Catalyzes the conversion of glucosamine-6-phosphate to glucosamine-1-phosphate.</text>
</comment>
<comment type="catalytic activity">
    <reaction evidence="1">
        <text>alpha-D-glucosamine 1-phosphate = D-glucosamine 6-phosphate</text>
        <dbReference type="Rhea" id="RHEA:23424"/>
        <dbReference type="ChEBI" id="CHEBI:58516"/>
        <dbReference type="ChEBI" id="CHEBI:58725"/>
        <dbReference type="EC" id="5.4.2.10"/>
    </reaction>
</comment>
<comment type="cofactor">
    <cofactor evidence="1">
        <name>Mg(2+)</name>
        <dbReference type="ChEBI" id="CHEBI:18420"/>
    </cofactor>
    <text evidence="1">Binds 1 Mg(2+) ion per subunit.</text>
</comment>
<comment type="PTM">
    <text evidence="1">Activated by phosphorylation.</text>
</comment>
<comment type="similarity">
    <text evidence="1">Belongs to the phosphohexose mutase family.</text>
</comment>
<evidence type="ECO:0000255" key="1">
    <source>
        <dbReference type="HAMAP-Rule" id="MF_01554"/>
    </source>
</evidence>
<gene>
    <name evidence="1" type="primary">glmM</name>
    <name type="ordered locus">lpl2709</name>
</gene>
<feature type="chain" id="PRO_0000147906" description="Phosphoglucosamine mutase">
    <location>
        <begin position="1"/>
        <end position="455"/>
    </location>
</feature>
<feature type="active site" description="Phosphoserine intermediate" evidence="1">
    <location>
        <position position="102"/>
    </location>
</feature>
<feature type="binding site" description="via phosphate group" evidence="1">
    <location>
        <position position="102"/>
    </location>
    <ligand>
        <name>Mg(2+)</name>
        <dbReference type="ChEBI" id="CHEBI:18420"/>
    </ligand>
</feature>
<feature type="binding site" evidence="1">
    <location>
        <position position="241"/>
    </location>
    <ligand>
        <name>Mg(2+)</name>
        <dbReference type="ChEBI" id="CHEBI:18420"/>
    </ligand>
</feature>
<feature type="binding site" evidence="1">
    <location>
        <position position="243"/>
    </location>
    <ligand>
        <name>Mg(2+)</name>
        <dbReference type="ChEBI" id="CHEBI:18420"/>
    </ligand>
</feature>
<feature type="binding site" evidence="1">
    <location>
        <position position="245"/>
    </location>
    <ligand>
        <name>Mg(2+)</name>
        <dbReference type="ChEBI" id="CHEBI:18420"/>
    </ligand>
</feature>
<feature type="modified residue" description="Phosphoserine" evidence="1">
    <location>
        <position position="102"/>
    </location>
</feature>
<name>GLMM_LEGPL</name>
<reference key="1">
    <citation type="journal article" date="2004" name="Nat. Genet.">
        <title>Evidence in the Legionella pneumophila genome for exploitation of host cell functions and high genome plasticity.</title>
        <authorList>
            <person name="Cazalet C."/>
            <person name="Rusniok C."/>
            <person name="Brueggemann H."/>
            <person name="Zidane N."/>
            <person name="Magnier A."/>
            <person name="Ma L."/>
            <person name="Tichit M."/>
            <person name="Jarraud S."/>
            <person name="Bouchier C."/>
            <person name="Vandenesch F."/>
            <person name="Kunst F."/>
            <person name="Etienne J."/>
            <person name="Glaser P."/>
            <person name="Buchrieser C."/>
        </authorList>
    </citation>
    <scope>NUCLEOTIDE SEQUENCE [LARGE SCALE GENOMIC DNA]</scope>
    <source>
        <strain>Lens</strain>
    </source>
</reference>
<proteinExistence type="inferred from homology"/>